<dbReference type="EC" id="2.1.1.189" evidence="1"/>
<dbReference type="EMBL" id="CP000857">
    <property type="protein sequence ID" value="ACN45089.1"/>
    <property type="molecule type" value="Genomic_DNA"/>
</dbReference>
<dbReference type="RefSeq" id="WP_001149779.1">
    <property type="nucleotide sequence ID" value="NC_012125.1"/>
</dbReference>
<dbReference type="SMR" id="C0PXN9"/>
<dbReference type="KEGG" id="sei:SPC_0921"/>
<dbReference type="HOGENOM" id="CLU_014689_0_0_6"/>
<dbReference type="Proteomes" id="UP000001599">
    <property type="component" value="Chromosome"/>
</dbReference>
<dbReference type="GO" id="GO:0051539">
    <property type="term" value="F:4 iron, 4 sulfur cluster binding"/>
    <property type="evidence" value="ECO:0007669"/>
    <property type="project" value="UniProtKB-KW"/>
</dbReference>
<dbReference type="GO" id="GO:0005506">
    <property type="term" value="F:iron ion binding"/>
    <property type="evidence" value="ECO:0007669"/>
    <property type="project" value="UniProtKB-UniRule"/>
</dbReference>
<dbReference type="GO" id="GO:0070041">
    <property type="term" value="F:rRNA (uridine-C5-)-methyltransferase activity"/>
    <property type="evidence" value="ECO:0007669"/>
    <property type="project" value="UniProtKB-UniRule"/>
</dbReference>
<dbReference type="GO" id="GO:0070475">
    <property type="term" value="P:rRNA base methylation"/>
    <property type="evidence" value="ECO:0007669"/>
    <property type="project" value="TreeGrafter"/>
</dbReference>
<dbReference type="CDD" id="cd02440">
    <property type="entry name" value="AdoMet_MTases"/>
    <property type="match status" value="1"/>
</dbReference>
<dbReference type="FunFam" id="2.40.50.1070:FF:000002">
    <property type="entry name" value="23S rRNA (uracil(747)-C(5))-methyltransferase RlmC"/>
    <property type="match status" value="1"/>
</dbReference>
<dbReference type="FunFam" id="3.40.50.150:FF:000049">
    <property type="entry name" value="23S rRNA (uracil(747)-C(5))-methyltransferase RlmC"/>
    <property type="match status" value="1"/>
</dbReference>
<dbReference type="Gene3D" id="2.40.50.1070">
    <property type="match status" value="1"/>
</dbReference>
<dbReference type="Gene3D" id="3.40.50.150">
    <property type="entry name" value="Vaccinia Virus protein VP39"/>
    <property type="match status" value="1"/>
</dbReference>
<dbReference type="HAMAP" id="MF_01012">
    <property type="entry name" value="23SrRNA_methyltr_RlmC"/>
    <property type="match status" value="1"/>
</dbReference>
<dbReference type="InterPro" id="IPR011825">
    <property type="entry name" value="23SrRNA_MeTrfase_RlmC"/>
</dbReference>
<dbReference type="InterPro" id="IPR030390">
    <property type="entry name" value="MeTrfase_TrmA_AS"/>
</dbReference>
<dbReference type="InterPro" id="IPR030391">
    <property type="entry name" value="MeTrfase_TrmA_CS"/>
</dbReference>
<dbReference type="InterPro" id="IPR029063">
    <property type="entry name" value="SAM-dependent_MTases_sf"/>
</dbReference>
<dbReference type="InterPro" id="IPR010280">
    <property type="entry name" value="U5_MeTrfase_fam"/>
</dbReference>
<dbReference type="NCBIfam" id="TIGR02085">
    <property type="entry name" value="meth_trns_rumB"/>
    <property type="match status" value="1"/>
</dbReference>
<dbReference type="PANTHER" id="PTHR11061">
    <property type="entry name" value="RNA M5U METHYLTRANSFERASE"/>
    <property type="match status" value="1"/>
</dbReference>
<dbReference type="PANTHER" id="PTHR11061:SF30">
    <property type="entry name" value="TRNA (URACIL(54)-C(5))-METHYLTRANSFERASE"/>
    <property type="match status" value="1"/>
</dbReference>
<dbReference type="Pfam" id="PF05958">
    <property type="entry name" value="tRNA_U5-meth_tr"/>
    <property type="match status" value="1"/>
</dbReference>
<dbReference type="SUPFAM" id="SSF53335">
    <property type="entry name" value="S-adenosyl-L-methionine-dependent methyltransferases"/>
    <property type="match status" value="1"/>
</dbReference>
<dbReference type="PROSITE" id="PS51687">
    <property type="entry name" value="SAM_MT_RNA_M5U"/>
    <property type="match status" value="1"/>
</dbReference>
<dbReference type="PROSITE" id="PS01230">
    <property type="entry name" value="TRMA_1"/>
    <property type="match status" value="1"/>
</dbReference>
<dbReference type="PROSITE" id="PS01231">
    <property type="entry name" value="TRMA_2"/>
    <property type="match status" value="1"/>
</dbReference>
<reference key="1">
    <citation type="journal article" date="2009" name="PLoS ONE">
        <title>Salmonella paratyphi C: genetic divergence from Salmonella choleraesuis and pathogenic convergence with Salmonella typhi.</title>
        <authorList>
            <person name="Liu W.-Q."/>
            <person name="Feng Y."/>
            <person name="Wang Y."/>
            <person name="Zou Q.-H."/>
            <person name="Chen F."/>
            <person name="Guo J.-T."/>
            <person name="Peng Y.-H."/>
            <person name="Jin Y."/>
            <person name="Li Y.-G."/>
            <person name="Hu S.-N."/>
            <person name="Johnston R.N."/>
            <person name="Liu G.-R."/>
            <person name="Liu S.-L."/>
        </authorList>
    </citation>
    <scope>NUCLEOTIDE SEQUENCE [LARGE SCALE GENOMIC DNA]</scope>
    <source>
        <strain>RKS4594</strain>
    </source>
</reference>
<comment type="function">
    <text evidence="1">Catalyzes the formation of 5-methyl-uridine at position 747 (m5U747) in 23S rRNA.</text>
</comment>
<comment type="catalytic activity">
    <reaction evidence="1">
        <text>uridine(747) in 23S rRNA + S-adenosyl-L-methionine = 5-methyluridine(747) in 23S rRNA + S-adenosyl-L-homocysteine + H(+)</text>
        <dbReference type="Rhea" id="RHEA:42628"/>
        <dbReference type="Rhea" id="RHEA-COMP:10154"/>
        <dbReference type="Rhea" id="RHEA-COMP:10155"/>
        <dbReference type="ChEBI" id="CHEBI:15378"/>
        <dbReference type="ChEBI" id="CHEBI:57856"/>
        <dbReference type="ChEBI" id="CHEBI:59789"/>
        <dbReference type="ChEBI" id="CHEBI:65315"/>
        <dbReference type="ChEBI" id="CHEBI:74447"/>
        <dbReference type="EC" id="2.1.1.189"/>
    </reaction>
</comment>
<comment type="similarity">
    <text evidence="1">Belongs to the class I-like SAM-binding methyltransferase superfamily. RNA M5U methyltransferase family. RlmC subfamily.</text>
</comment>
<gene>
    <name evidence="1" type="primary">rlmC</name>
    <name type="synonym">rumB</name>
    <name type="ordered locus">SPC_0921</name>
</gene>
<keyword id="KW-0004">4Fe-4S</keyword>
<keyword id="KW-0408">Iron</keyword>
<keyword id="KW-0411">Iron-sulfur</keyword>
<keyword id="KW-0479">Metal-binding</keyword>
<keyword id="KW-0489">Methyltransferase</keyword>
<keyword id="KW-0698">rRNA processing</keyword>
<keyword id="KW-0949">S-adenosyl-L-methionine</keyword>
<keyword id="KW-0808">Transferase</keyword>
<sequence>MQCALYDAGRCRSCQWITQSVNEQLSAKTADLHRLLAGLPVEQWCAPIGGPEQHFRNKAKMVVSGSVEKPLFGMLHRDGTPVDLCGCPLYPASFAPVFSALKPFIARAGLTPYNVARKRGELKYLLLTESQFDGGMMLRFVLRSETKLTQLRAALPWLRAQLPQLRVITANIQPVHMAIMEGETEIYLTDQQALVERFNDVPLWIRPQSFFQTNPTVASRLYATARDWVGQLPVRHMWDLFCGVGGFGLHCATPQMQLTGIEIAPEAIACAKQSAAELGLTRLHFQALDSTQFAIAQGETPDLVLVNPPRRGIGKPLCDYLAQMAPRFIIYSSCNAQTMAQDIRHLPNYRIQRVQLFDMFPHTAHYEVLALLRRSI</sequence>
<evidence type="ECO:0000255" key="1">
    <source>
        <dbReference type="HAMAP-Rule" id="MF_01012"/>
    </source>
</evidence>
<organism>
    <name type="scientific">Salmonella paratyphi C (strain RKS4594)</name>
    <dbReference type="NCBI Taxonomy" id="476213"/>
    <lineage>
        <taxon>Bacteria</taxon>
        <taxon>Pseudomonadati</taxon>
        <taxon>Pseudomonadota</taxon>
        <taxon>Gammaproteobacteria</taxon>
        <taxon>Enterobacterales</taxon>
        <taxon>Enterobacteriaceae</taxon>
        <taxon>Salmonella</taxon>
    </lineage>
</organism>
<proteinExistence type="inferred from homology"/>
<accession>C0PXN9</accession>
<protein>
    <recommendedName>
        <fullName evidence="1">23S rRNA (uracil(747)-C(5))-methyltransferase RlmC</fullName>
        <ecNumber evidence="1">2.1.1.189</ecNumber>
    </recommendedName>
    <alternativeName>
        <fullName evidence="1">23S rRNA(m5U747)-methyltransferase</fullName>
    </alternativeName>
</protein>
<feature type="chain" id="PRO_1000148896" description="23S rRNA (uracil(747)-C(5))-methyltransferase RlmC">
    <location>
        <begin position="1"/>
        <end position="376"/>
    </location>
</feature>
<feature type="active site" description="Nucleophile" evidence="1">
    <location>
        <position position="334"/>
    </location>
</feature>
<feature type="binding site" evidence="1">
    <location>
        <position position="3"/>
    </location>
    <ligand>
        <name>[4Fe-4S] cluster</name>
        <dbReference type="ChEBI" id="CHEBI:49883"/>
    </ligand>
</feature>
<feature type="binding site" evidence="1">
    <location>
        <position position="11"/>
    </location>
    <ligand>
        <name>[4Fe-4S] cluster</name>
        <dbReference type="ChEBI" id="CHEBI:49883"/>
    </ligand>
</feature>
<feature type="binding site" evidence="1">
    <location>
        <position position="14"/>
    </location>
    <ligand>
        <name>[4Fe-4S] cluster</name>
        <dbReference type="ChEBI" id="CHEBI:49883"/>
    </ligand>
</feature>
<feature type="binding site" evidence="1">
    <location>
        <position position="87"/>
    </location>
    <ligand>
        <name>[4Fe-4S] cluster</name>
        <dbReference type="ChEBI" id="CHEBI:49883"/>
    </ligand>
</feature>
<feature type="binding site" evidence="1">
    <location>
        <position position="212"/>
    </location>
    <ligand>
        <name>S-adenosyl-L-methionine</name>
        <dbReference type="ChEBI" id="CHEBI:59789"/>
    </ligand>
</feature>
<feature type="binding site" evidence="1">
    <location>
        <position position="241"/>
    </location>
    <ligand>
        <name>S-adenosyl-L-methionine</name>
        <dbReference type="ChEBI" id="CHEBI:59789"/>
    </ligand>
</feature>
<feature type="binding site" evidence="1">
    <location>
        <position position="262"/>
    </location>
    <ligand>
        <name>S-adenosyl-L-methionine</name>
        <dbReference type="ChEBI" id="CHEBI:59789"/>
    </ligand>
</feature>
<feature type="binding site" evidence="1">
    <location>
        <position position="307"/>
    </location>
    <ligand>
        <name>S-adenosyl-L-methionine</name>
        <dbReference type="ChEBI" id="CHEBI:59789"/>
    </ligand>
</feature>
<name>RLMC_SALPC</name>